<protein>
    <recommendedName>
        <fullName evidence="1">Ribose-phosphate pyrophosphokinase</fullName>
        <shortName evidence="1">RPPK</shortName>
        <ecNumber evidence="1">2.7.6.1</ecNumber>
    </recommendedName>
    <alternativeName>
        <fullName evidence="1">5-phospho-D-ribosyl alpha-1-diphosphate synthase</fullName>
    </alternativeName>
    <alternativeName>
        <fullName evidence="1">Phosphoribosyl diphosphate synthase</fullName>
    </alternativeName>
    <alternativeName>
        <fullName evidence="1">Phosphoribosyl pyrophosphate synthase</fullName>
        <shortName evidence="1">P-Rib-PP synthase</shortName>
        <shortName evidence="1">PRPP synthase</shortName>
        <shortName evidence="1">PRPPase</shortName>
    </alternativeName>
</protein>
<name>KPRS_HELPY</name>
<accession>P56184</accession>
<feature type="chain" id="PRO_0000141144" description="Ribose-phosphate pyrophosphokinase">
    <location>
        <begin position="1"/>
        <end position="318"/>
    </location>
</feature>
<feature type="active site" evidence="1">
    <location>
        <position position="201"/>
    </location>
</feature>
<feature type="binding site" evidence="1">
    <location>
        <begin position="46"/>
        <end position="48"/>
    </location>
    <ligand>
        <name>ATP</name>
        <dbReference type="ChEBI" id="CHEBI:30616"/>
    </ligand>
</feature>
<feature type="binding site" evidence="1">
    <location>
        <begin position="105"/>
        <end position="106"/>
    </location>
    <ligand>
        <name>ATP</name>
        <dbReference type="ChEBI" id="CHEBI:30616"/>
    </ligand>
</feature>
<feature type="binding site" evidence="1">
    <location>
        <position position="139"/>
    </location>
    <ligand>
        <name>Mg(2+)</name>
        <dbReference type="ChEBI" id="CHEBI:18420"/>
        <label>1</label>
    </ligand>
</feature>
<feature type="binding site" evidence="1">
    <location>
        <position position="178"/>
    </location>
    <ligand>
        <name>Mg(2+)</name>
        <dbReference type="ChEBI" id="CHEBI:18420"/>
        <label>2</label>
    </ligand>
</feature>
<feature type="binding site" evidence="1">
    <location>
        <position position="203"/>
    </location>
    <ligand>
        <name>D-ribose 5-phosphate</name>
        <dbReference type="ChEBI" id="CHEBI:78346"/>
    </ligand>
</feature>
<feature type="binding site" evidence="1">
    <location>
        <position position="227"/>
    </location>
    <ligand>
        <name>D-ribose 5-phosphate</name>
        <dbReference type="ChEBI" id="CHEBI:78346"/>
    </ligand>
</feature>
<feature type="binding site" evidence="1">
    <location>
        <begin position="231"/>
        <end position="235"/>
    </location>
    <ligand>
        <name>D-ribose 5-phosphate</name>
        <dbReference type="ChEBI" id="CHEBI:78346"/>
    </ligand>
</feature>
<dbReference type="EC" id="2.7.6.1" evidence="1"/>
<dbReference type="EMBL" id="AE000511">
    <property type="protein sequence ID" value="AAD07793.1"/>
    <property type="molecule type" value="Genomic_DNA"/>
</dbReference>
<dbReference type="PIR" id="F64612">
    <property type="entry name" value="F64612"/>
</dbReference>
<dbReference type="RefSeq" id="NP_207536.1">
    <property type="nucleotide sequence ID" value="NC_000915.1"/>
</dbReference>
<dbReference type="RefSeq" id="WP_000647423.1">
    <property type="nucleotide sequence ID" value="NC_018939.1"/>
</dbReference>
<dbReference type="SMR" id="P56184"/>
<dbReference type="FunCoup" id="P56184">
    <property type="interactions" value="416"/>
</dbReference>
<dbReference type="STRING" id="85962.HP_0742"/>
<dbReference type="PaxDb" id="85962-C694_03815"/>
<dbReference type="EnsemblBacteria" id="AAD07793">
    <property type="protein sequence ID" value="AAD07793"/>
    <property type="gene ID" value="HP_0742"/>
</dbReference>
<dbReference type="KEGG" id="hpy:HP_0742"/>
<dbReference type="PATRIC" id="fig|85962.8.peg.774"/>
<dbReference type="eggNOG" id="COG0462">
    <property type="taxonomic scope" value="Bacteria"/>
</dbReference>
<dbReference type="InParanoid" id="P56184"/>
<dbReference type="OrthoDB" id="9777067at2"/>
<dbReference type="PhylomeDB" id="P56184"/>
<dbReference type="UniPathway" id="UPA00087">
    <property type="reaction ID" value="UER00172"/>
</dbReference>
<dbReference type="Proteomes" id="UP000000429">
    <property type="component" value="Chromosome"/>
</dbReference>
<dbReference type="GO" id="GO:0005737">
    <property type="term" value="C:cytoplasm"/>
    <property type="evidence" value="ECO:0000318"/>
    <property type="project" value="GO_Central"/>
</dbReference>
<dbReference type="GO" id="GO:0002189">
    <property type="term" value="C:ribose phosphate diphosphokinase complex"/>
    <property type="evidence" value="ECO:0000318"/>
    <property type="project" value="GO_Central"/>
</dbReference>
<dbReference type="GO" id="GO:0005524">
    <property type="term" value="F:ATP binding"/>
    <property type="evidence" value="ECO:0007669"/>
    <property type="project" value="UniProtKB-KW"/>
</dbReference>
<dbReference type="GO" id="GO:0016301">
    <property type="term" value="F:kinase activity"/>
    <property type="evidence" value="ECO:0007669"/>
    <property type="project" value="UniProtKB-KW"/>
</dbReference>
<dbReference type="GO" id="GO:0000287">
    <property type="term" value="F:magnesium ion binding"/>
    <property type="evidence" value="ECO:0007669"/>
    <property type="project" value="UniProtKB-UniRule"/>
</dbReference>
<dbReference type="GO" id="GO:0004749">
    <property type="term" value="F:ribose phosphate diphosphokinase activity"/>
    <property type="evidence" value="ECO:0000318"/>
    <property type="project" value="GO_Central"/>
</dbReference>
<dbReference type="GO" id="GO:0006015">
    <property type="term" value="P:5-phosphoribose 1-diphosphate biosynthetic process"/>
    <property type="evidence" value="ECO:0000318"/>
    <property type="project" value="GO_Central"/>
</dbReference>
<dbReference type="GO" id="GO:0006164">
    <property type="term" value="P:purine nucleotide biosynthetic process"/>
    <property type="evidence" value="ECO:0000318"/>
    <property type="project" value="GO_Central"/>
</dbReference>
<dbReference type="GO" id="GO:0009156">
    <property type="term" value="P:ribonucleoside monophosphate biosynthetic process"/>
    <property type="evidence" value="ECO:0007669"/>
    <property type="project" value="InterPro"/>
</dbReference>
<dbReference type="CDD" id="cd06223">
    <property type="entry name" value="PRTases_typeI"/>
    <property type="match status" value="1"/>
</dbReference>
<dbReference type="FunFam" id="3.40.50.2020:FF:000002">
    <property type="entry name" value="Ribose-phosphate pyrophosphokinase"/>
    <property type="match status" value="1"/>
</dbReference>
<dbReference type="FunFam" id="3.40.50.2020:FF:000007">
    <property type="entry name" value="Ribose-phosphate pyrophosphokinase"/>
    <property type="match status" value="1"/>
</dbReference>
<dbReference type="Gene3D" id="3.40.50.2020">
    <property type="match status" value="2"/>
</dbReference>
<dbReference type="HAMAP" id="MF_00583_B">
    <property type="entry name" value="RibP_PPkinase_B"/>
    <property type="match status" value="1"/>
</dbReference>
<dbReference type="InterPro" id="IPR000842">
    <property type="entry name" value="PRib_PP_synth_CS"/>
</dbReference>
<dbReference type="InterPro" id="IPR029099">
    <property type="entry name" value="Pribosyltran_N"/>
</dbReference>
<dbReference type="InterPro" id="IPR000836">
    <property type="entry name" value="PRibTrfase_dom"/>
</dbReference>
<dbReference type="InterPro" id="IPR029057">
    <property type="entry name" value="PRTase-like"/>
</dbReference>
<dbReference type="InterPro" id="IPR005946">
    <property type="entry name" value="Rib-P_diPkinase"/>
</dbReference>
<dbReference type="InterPro" id="IPR037515">
    <property type="entry name" value="Rib-P_diPkinase_bac"/>
</dbReference>
<dbReference type="NCBIfam" id="NF002320">
    <property type="entry name" value="PRK01259.1"/>
    <property type="match status" value="1"/>
</dbReference>
<dbReference type="NCBIfam" id="TIGR01251">
    <property type="entry name" value="ribP_PPkin"/>
    <property type="match status" value="1"/>
</dbReference>
<dbReference type="PANTHER" id="PTHR10210">
    <property type="entry name" value="RIBOSE-PHOSPHATE DIPHOSPHOKINASE FAMILY MEMBER"/>
    <property type="match status" value="1"/>
</dbReference>
<dbReference type="PANTHER" id="PTHR10210:SF41">
    <property type="entry name" value="RIBOSE-PHOSPHATE PYROPHOSPHOKINASE 1, CHLOROPLASTIC"/>
    <property type="match status" value="1"/>
</dbReference>
<dbReference type="Pfam" id="PF14572">
    <property type="entry name" value="Pribosyl_synth"/>
    <property type="match status" value="1"/>
</dbReference>
<dbReference type="Pfam" id="PF13793">
    <property type="entry name" value="Pribosyltran_N"/>
    <property type="match status" value="1"/>
</dbReference>
<dbReference type="SMART" id="SM01400">
    <property type="entry name" value="Pribosyltran_N"/>
    <property type="match status" value="1"/>
</dbReference>
<dbReference type="SUPFAM" id="SSF53271">
    <property type="entry name" value="PRTase-like"/>
    <property type="match status" value="1"/>
</dbReference>
<dbReference type="PROSITE" id="PS00114">
    <property type="entry name" value="PRPP_SYNTHASE"/>
    <property type="match status" value="1"/>
</dbReference>
<gene>
    <name evidence="1" type="primary">prs</name>
    <name type="synonym">prsA</name>
    <name type="ordered locus">HP_0742</name>
</gene>
<keyword id="KW-0067">ATP-binding</keyword>
<keyword id="KW-0963">Cytoplasm</keyword>
<keyword id="KW-0418">Kinase</keyword>
<keyword id="KW-0460">Magnesium</keyword>
<keyword id="KW-0479">Metal-binding</keyword>
<keyword id="KW-0545">Nucleotide biosynthesis</keyword>
<keyword id="KW-0547">Nucleotide-binding</keyword>
<keyword id="KW-1185">Reference proteome</keyword>
<keyword id="KW-0808">Transferase</keyword>
<proteinExistence type="inferred from homology"/>
<sequence length="318" mass="34825">MKARGFKAKMRGFKIFSGSAHPAFGKEVSKHLGFPLSKAVIGKFSDGEINIQISESVRGKDIFIIQPTCVPVNDNLMELLVMVDALRRSSANSITAVLPYFGYARQDRKAAPRVPITAKMVANLMQEVGIERIITMDLHAGQIQGFFDVPVDNLYGSIVFRDYIRSKALKNPVIASPDVGGVTRARYFANQMGLDLIIVDKRREKANESEVMNIIGSAKERDVILVDDMIDTAGTICKAALALKEQGATSVMALGTHAVLSGNAIKRIKESALDEVVVTNSIPLVQKCDKITTLSVAPLFAEVIRRIYHNESVQSLFT</sequence>
<comment type="function">
    <text evidence="1">Involved in the biosynthesis of the central metabolite phospho-alpha-D-ribosyl-1-pyrophosphate (PRPP) via the transfer of pyrophosphoryl group from ATP to 1-hydroxyl of ribose-5-phosphate (Rib-5-P).</text>
</comment>
<comment type="catalytic activity">
    <reaction evidence="1">
        <text>D-ribose 5-phosphate + ATP = 5-phospho-alpha-D-ribose 1-diphosphate + AMP + H(+)</text>
        <dbReference type="Rhea" id="RHEA:15609"/>
        <dbReference type="ChEBI" id="CHEBI:15378"/>
        <dbReference type="ChEBI" id="CHEBI:30616"/>
        <dbReference type="ChEBI" id="CHEBI:58017"/>
        <dbReference type="ChEBI" id="CHEBI:78346"/>
        <dbReference type="ChEBI" id="CHEBI:456215"/>
        <dbReference type="EC" id="2.7.6.1"/>
    </reaction>
</comment>
<comment type="cofactor">
    <cofactor evidence="1">
        <name>Mg(2+)</name>
        <dbReference type="ChEBI" id="CHEBI:18420"/>
    </cofactor>
    <text evidence="1">Binds 2 Mg(2+) ions per subunit.</text>
</comment>
<comment type="pathway">
    <text evidence="1">Metabolic intermediate biosynthesis; 5-phospho-alpha-D-ribose 1-diphosphate biosynthesis; 5-phospho-alpha-D-ribose 1-diphosphate from D-ribose 5-phosphate (route I): step 1/1.</text>
</comment>
<comment type="subunit">
    <text evidence="1">Homohexamer.</text>
</comment>
<comment type="subcellular location">
    <subcellularLocation>
        <location evidence="1">Cytoplasm</location>
    </subcellularLocation>
</comment>
<comment type="similarity">
    <text evidence="1">Belongs to the ribose-phosphate pyrophosphokinase family. Class I subfamily.</text>
</comment>
<evidence type="ECO:0000255" key="1">
    <source>
        <dbReference type="HAMAP-Rule" id="MF_00583"/>
    </source>
</evidence>
<reference key="1">
    <citation type="journal article" date="1997" name="Nature">
        <title>The complete genome sequence of the gastric pathogen Helicobacter pylori.</title>
        <authorList>
            <person name="Tomb J.-F."/>
            <person name="White O."/>
            <person name="Kerlavage A.R."/>
            <person name="Clayton R.A."/>
            <person name="Sutton G.G."/>
            <person name="Fleischmann R.D."/>
            <person name="Ketchum K.A."/>
            <person name="Klenk H.-P."/>
            <person name="Gill S.R."/>
            <person name="Dougherty B.A."/>
            <person name="Nelson K.E."/>
            <person name="Quackenbush J."/>
            <person name="Zhou L."/>
            <person name="Kirkness E.F."/>
            <person name="Peterson S.N."/>
            <person name="Loftus B.J."/>
            <person name="Richardson D.L."/>
            <person name="Dodson R.J."/>
            <person name="Khalak H.G."/>
            <person name="Glodek A."/>
            <person name="McKenney K."/>
            <person name="FitzGerald L.M."/>
            <person name="Lee N."/>
            <person name="Adams M.D."/>
            <person name="Hickey E.K."/>
            <person name="Berg D.E."/>
            <person name="Gocayne J.D."/>
            <person name="Utterback T.R."/>
            <person name="Peterson J.D."/>
            <person name="Kelley J.M."/>
            <person name="Cotton M.D."/>
            <person name="Weidman J.F."/>
            <person name="Fujii C."/>
            <person name="Bowman C."/>
            <person name="Watthey L."/>
            <person name="Wallin E."/>
            <person name="Hayes W.S."/>
            <person name="Borodovsky M."/>
            <person name="Karp P.D."/>
            <person name="Smith H.O."/>
            <person name="Fraser C.M."/>
            <person name="Venter J.C."/>
        </authorList>
    </citation>
    <scope>NUCLEOTIDE SEQUENCE [LARGE SCALE GENOMIC DNA]</scope>
    <source>
        <strain>ATCC 700392 / 26695</strain>
    </source>
</reference>
<organism>
    <name type="scientific">Helicobacter pylori (strain ATCC 700392 / 26695)</name>
    <name type="common">Campylobacter pylori</name>
    <dbReference type="NCBI Taxonomy" id="85962"/>
    <lineage>
        <taxon>Bacteria</taxon>
        <taxon>Pseudomonadati</taxon>
        <taxon>Campylobacterota</taxon>
        <taxon>Epsilonproteobacteria</taxon>
        <taxon>Campylobacterales</taxon>
        <taxon>Helicobacteraceae</taxon>
        <taxon>Helicobacter</taxon>
    </lineage>
</organism>